<protein>
    <recommendedName>
        <fullName evidence="1">ATP synthase subunit a</fullName>
    </recommendedName>
    <alternativeName>
        <fullName evidence="1">ATP synthase F0 sector subunit a</fullName>
    </alternativeName>
    <alternativeName>
        <fullName evidence="1">F-ATPase subunit 6</fullName>
    </alternativeName>
</protein>
<gene>
    <name evidence="1" type="primary">atpB</name>
    <name type="ordered locus">LPC_2222</name>
</gene>
<proteinExistence type="inferred from homology"/>
<name>ATP6_LEGPC</name>
<feature type="chain" id="PRO_0000362336" description="ATP synthase subunit a">
    <location>
        <begin position="1"/>
        <end position="230"/>
    </location>
</feature>
<feature type="transmembrane region" description="Helical" evidence="1">
    <location>
        <begin position="17"/>
        <end position="37"/>
    </location>
</feature>
<feature type="transmembrane region" description="Helical" evidence="1">
    <location>
        <begin position="78"/>
        <end position="98"/>
    </location>
</feature>
<feature type="transmembrane region" description="Helical" evidence="1">
    <location>
        <begin position="107"/>
        <end position="127"/>
    </location>
</feature>
<feature type="transmembrane region" description="Helical" evidence="1">
    <location>
        <begin position="165"/>
        <end position="187"/>
    </location>
</feature>
<feature type="transmembrane region" description="Helical" evidence="1">
    <location>
        <begin position="198"/>
        <end position="218"/>
    </location>
</feature>
<dbReference type="EMBL" id="CP000675">
    <property type="protein sequence ID" value="ABQ56146.1"/>
    <property type="molecule type" value="Genomic_DNA"/>
</dbReference>
<dbReference type="SMR" id="A5IFJ6"/>
<dbReference type="KEGG" id="lpc:LPC_2222"/>
<dbReference type="HOGENOM" id="CLU_041018_2_5_6"/>
<dbReference type="GO" id="GO:0005886">
    <property type="term" value="C:plasma membrane"/>
    <property type="evidence" value="ECO:0007669"/>
    <property type="project" value="UniProtKB-SubCell"/>
</dbReference>
<dbReference type="GO" id="GO:0045259">
    <property type="term" value="C:proton-transporting ATP synthase complex"/>
    <property type="evidence" value="ECO:0007669"/>
    <property type="project" value="UniProtKB-KW"/>
</dbReference>
<dbReference type="GO" id="GO:0046933">
    <property type="term" value="F:proton-transporting ATP synthase activity, rotational mechanism"/>
    <property type="evidence" value="ECO:0007669"/>
    <property type="project" value="UniProtKB-UniRule"/>
</dbReference>
<dbReference type="GO" id="GO:0042777">
    <property type="term" value="P:proton motive force-driven plasma membrane ATP synthesis"/>
    <property type="evidence" value="ECO:0007669"/>
    <property type="project" value="TreeGrafter"/>
</dbReference>
<dbReference type="CDD" id="cd00310">
    <property type="entry name" value="ATP-synt_Fo_a_6"/>
    <property type="match status" value="1"/>
</dbReference>
<dbReference type="Gene3D" id="1.20.120.220">
    <property type="entry name" value="ATP synthase, F0 complex, subunit A"/>
    <property type="match status" value="1"/>
</dbReference>
<dbReference type="HAMAP" id="MF_01393">
    <property type="entry name" value="ATP_synth_a_bact"/>
    <property type="match status" value="1"/>
</dbReference>
<dbReference type="InterPro" id="IPR045082">
    <property type="entry name" value="ATP_syn_F0_a_bact/chloroplast"/>
</dbReference>
<dbReference type="InterPro" id="IPR000568">
    <property type="entry name" value="ATP_synth_F0_asu"/>
</dbReference>
<dbReference type="InterPro" id="IPR023011">
    <property type="entry name" value="ATP_synth_F0_asu_AS"/>
</dbReference>
<dbReference type="InterPro" id="IPR035908">
    <property type="entry name" value="F0_ATP_A_sf"/>
</dbReference>
<dbReference type="NCBIfam" id="TIGR01131">
    <property type="entry name" value="ATP_synt_6_or_A"/>
    <property type="match status" value="1"/>
</dbReference>
<dbReference type="NCBIfam" id="NF009954">
    <property type="entry name" value="PRK13420.1"/>
    <property type="match status" value="1"/>
</dbReference>
<dbReference type="PANTHER" id="PTHR42823">
    <property type="entry name" value="ATP SYNTHASE SUBUNIT A, CHLOROPLASTIC"/>
    <property type="match status" value="1"/>
</dbReference>
<dbReference type="PANTHER" id="PTHR42823:SF3">
    <property type="entry name" value="ATP SYNTHASE SUBUNIT A, CHLOROPLASTIC"/>
    <property type="match status" value="1"/>
</dbReference>
<dbReference type="Pfam" id="PF00119">
    <property type="entry name" value="ATP-synt_A"/>
    <property type="match status" value="1"/>
</dbReference>
<dbReference type="PRINTS" id="PR00123">
    <property type="entry name" value="ATPASEA"/>
</dbReference>
<dbReference type="SUPFAM" id="SSF81336">
    <property type="entry name" value="F1F0 ATP synthase subunit A"/>
    <property type="match status" value="1"/>
</dbReference>
<dbReference type="PROSITE" id="PS00449">
    <property type="entry name" value="ATPASE_A"/>
    <property type="match status" value="1"/>
</dbReference>
<keyword id="KW-0066">ATP synthesis</keyword>
<keyword id="KW-0997">Cell inner membrane</keyword>
<keyword id="KW-1003">Cell membrane</keyword>
<keyword id="KW-0138">CF(0)</keyword>
<keyword id="KW-0375">Hydrogen ion transport</keyword>
<keyword id="KW-0406">Ion transport</keyword>
<keyword id="KW-0472">Membrane</keyword>
<keyword id="KW-0812">Transmembrane</keyword>
<keyword id="KW-1133">Transmembrane helix</keyword>
<keyword id="KW-0813">Transport</keyword>
<accession>A5IFJ6</accession>
<organism>
    <name type="scientific">Legionella pneumophila (strain Corby)</name>
    <dbReference type="NCBI Taxonomy" id="400673"/>
    <lineage>
        <taxon>Bacteria</taxon>
        <taxon>Pseudomonadati</taxon>
        <taxon>Pseudomonadota</taxon>
        <taxon>Gammaproteobacteria</taxon>
        <taxon>Legionellales</taxon>
        <taxon>Legionellaceae</taxon>
        <taxon>Legionella</taxon>
    </lineage>
</organism>
<comment type="function">
    <text evidence="1">Key component of the proton channel; it plays a direct role in the translocation of protons across the membrane.</text>
</comment>
<comment type="subunit">
    <text evidence="1">F-type ATPases have 2 components, CF(1) - the catalytic core - and CF(0) - the membrane proton channel. CF(1) has five subunits: alpha(3), beta(3), gamma(1), delta(1), epsilon(1). CF(0) has three main subunits: a(1), b(2) and c(9-12). The alpha and beta chains form an alternating ring which encloses part of the gamma chain. CF(1) is attached to CF(0) by a central stalk formed by the gamma and epsilon chains, while a peripheral stalk is formed by the delta and b chains.</text>
</comment>
<comment type="subcellular location">
    <subcellularLocation>
        <location evidence="1">Cell inner membrane</location>
        <topology evidence="1">Multi-pass membrane protein</topology>
    </subcellularLocation>
</comment>
<comment type="similarity">
    <text evidence="1">Belongs to the ATPase A chain family.</text>
</comment>
<reference key="1">
    <citation type="submission" date="2006-11" db="EMBL/GenBank/DDBJ databases">
        <title>Identification and characterization of a new conjugation/ type IVA secretion system (trb/tra) of L. pneumophila Corby localized on a mobile genomic island.</title>
        <authorList>
            <person name="Gloeckner G."/>
            <person name="Albert-Weissenberger C."/>
            <person name="Weinmann E."/>
            <person name="Jacobi S."/>
            <person name="Schunder E."/>
            <person name="Steinert M."/>
            <person name="Buchrieser C."/>
            <person name="Hacker J."/>
            <person name="Heuner K."/>
        </authorList>
    </citation>
    <scope>NUCLEOTIDE SEQUENCE [LARGE SCALE GENOMIC DNA]</scope>
    <source>
        <strain>Corby</strain>
    </source>
</reference>
<sequence length="230" mass="25727">MGEEGFLAHFAFSIGGLPITQSVLTTWFIMISLFIMAWSTTYKCSLLQPSTYQLLWEGVLSTMYDAIKEVLPDHVELIFPFVATLWIFILVSNLIGVIPGFYSPTADLSVTASLAMMTFLSVHWFGIRAEGWREYLKHYIKPTPFLLPFHLISEISRTLALAVRLFGNIMSLQLTALIVLMIAGFLVPIPILILHIIEAIIQAYIFGMLALIYIAGGIQAHELKSQGESL</sequence>
<evidence type="ECO:0000255" key="1">
    <source>
        <dbReference type="HAMAP-Rule" id="MF_01393"/>
    </source>
</evidence>